<dbReference type="EC" id="2.7.7.6" evidence="1"/>
<dbReference type="EMBL" id="BX950229">
    <property type="protein sequence ID" value="CAF30920.1"/>
    <property type="molecule type" value="Genomic_DNA"/>
</dbReference>
<dbReference type="RefSeq" id="WP_011171308.1">
    <property type="nucleotide sequence ID" value="NC_005791.1"/>
</dbReference>
<dbReference type="SMR" id="Q6LXI7"/>
<dbReference type="STRING" id="267377.MMP1364"/>
<dbReference type="EnsemblBacteria" id="CAF30920">
    <property type="protein sequence ID" value="CAF30920"/>
    <property type="gene ID" value="MMP1364"/>
</dbReference>
<dbReference type="GeneID" id="2762458"/>
<dbReference type="KEGG" id="mmp:MMP1364"/>
<dbReference type="PATRIC" id="fig|267377.15.peg.1399"/>
<dbReference type="eggNOG" id="arCOG04256">
    <property type="taxonomic scope" value="Archaea"/>
</dbReference>
<dbReference type="HOGENOM" id="CLU_037097_1_0_2"/>
<dbReference type="OrthoDB" id="372142at2157"/>
<dbReference type="Proteomes" id="UP000000590">
    <property type="component" value="Chromosome"/>
</dbReference>
<dbReference type="GO" id="GO:0005737">
    <property type="term" value="C:cytoplasm"/>
    <property type="evidence" value="ECO:0007669"/>
    <property type="project" value="UniProtKB-SubCell"/>
</dbReference>
<dbReference type="GO" id="GO:0000428">
    <property type="term" value="C:DNA-directed RNA polymerase complex"/>
    <property type="evidence" value="ECO:0007669"/>
    <property type="project" value="UniProtKB-KW"/>
</dbReference>
<dbReference type="GO" id="GO:0003677">
    <property type="term" value="F:DNA binding"/>
    <property type="evidence" value="ECO:0007669"/>
    <property type="project" value="UniProtKB-UniRule"/>
</dbReference>
<dbReference type="GO" id="GO:0003899">
    <property type="term" value="F:DNA-directed RNA polymerase activity"/>
    <property type="evidence" value="ECO:0007669"/>
    <property type="project" value="UniProtKB-UniRule"/>
</dbReference>
<dbReference type="GO" id="GO:0006351">
    <property type="term" value="P:DNA-templated transcription"/>
    <property type="evidence" value="ECO:0007669"/>
    <property type="project" value="UniProtKB-UniRule"/>
</dbReference>
<dbReference type="CDD" id="cd06528">
    <property type="entry name" value="RNAP_A"/>
    <property type="match status" value="1"/>
</dbReference>
<dbReference type="Gene3D" id="1.10.150.390">
    <property type="match status" value="1"/>
</dbReference>
<dbReference type="HAMAP" id="MF_00411">
    <property type="entry name" value="RNApol_arch_Rpo1C"/>
    <property type="match status" value="1"/>
</dbReference>
<dbReference type="InterPro" id="IPR045867">
    <property type="entry name" value="DNA-dir_RpoC_beta_prime"/>
</dbReference>
<dbReference type="InterPro" id="IPR007081">
    <property type="entry name" value="RNA_pol_Rpb1_5"/>
</dbReference>
<dbReference type="InterPro" id="IPR012757">
    <property type="entry name" value="RPO1C"/>
</dbReference>
<dbReference type="NCBIfam" id="TIGR02389">
    <property type="entry name" value="RNA_pol_rpoA2"/>
    <property type="match status" value="1"/>
</dbReference>
<dbReference type="PANTHER" id="PTHR19376">
    <property type="entry name" value="DNA-DIRECTED RNA POLYMERASE"/>
    <property type="match status" value="1"/>
</dbReference>
<dbReference type="PANTHER" id="PTHR19376:SF32">
    <property type="entry name" value="DNA-DIRECTED RNA POLYMERASE III SUBUNIT RPC1"/>
    <property type="match status" value="1"/>
</dbReference>
<dbReference type="Pfam" id="PF04998">
    <property type="entry name" value="RNA_pol_Rpb1_5"/>
    <property type="match status" value="1"/>
</dbReference>
<dbReference type="SUPFAM" id="SSF64484">
    <property type="entry name" value="beta and beta-prime subunits of DNA dependent RNA-polymerase"/>
    <property type="match status" value="1"/>
</dbReference>
<protein>
    <recommendedName>
        <fullName evidence="1">DNA-directed RNA polymerase subunit Rpo1C</fullName>
        <ecNumber evidence="1">2.7.7.6</ecNumber>
    </recommendedName>
    <alternativeName>
        <fullName evidence="1">DNA-directed RNA polymerase subunit A''</fullName>
    </alternativeName>
</protein>
<proteinExistence type="inferred from homology"/>
<comment type="function">
    <text evidence="1">DNA-dependent RNA polymerase (RNAP) catalyzes the transcription of DNA into RNA using the four ribonucleoside triphosphates as substrates. Forms part of the jaw domain.</text>
</comment>
<comment type="catalytic activity">
    <reaction evidence="1">
        <text>RNA(n) + a ribonucleoside 5'-triphosphate = RNA(n+1) + diphosphate</text>
        <dbReference type="Rhea" id="RHEA:21248"/>
        <dbReference type="Rhea" id="RHEA-COMP:14527"/>
        <dbReference type="Rhea" id="RHEA-COMP:17342"/>
        <dbReference type="ChEBI" id="CHEBI:33019"/>
        <dbReference type="ChEBI" id="CHEBI:61557"/>
        <dbReference type="ChEBI" id="CHEBI:140395"/>
        <dbReference type="EC" id="2.7.7.6"/>
    </reaction>
</comment>
<comment type="subunit">
    <text evidence="1">Part of the RNA polymerase complex.</text>
</comment>
<comment type="subcellular location">
    <subcellularLocation>
        <location evidence="1">Cytoplasm</location>
    </subcellularLocation>
</comment>
<comment type="similarity">
    <text evidence="1">Belongs to the RNA polymerase beta' chain family.</text>
</comment>
<organism>
    <name type="scientific">Methanococcus maripaludis (strain DSM 14266 / JCM 13030 / NBRC 101832 / S2 / LL)</name>
    <dbReference type="NCBI Taxonomy" id="267377"/>
    <lineage>
        <taxon>Archaea</taxon>
        <taxon>Methanobacteriati</taxon>
        <taxon>Methanobacteriota</taxon>
        <taxon>Methanomada group</taxon>
        <taxon>Methanococci</taxon>
        <taxon>Methanococcales</taxon>
        <taxon>Methanococcaceae</taxon>
        <taxon>Methanococcus</taxon>
    </lineage>
</organism>
<evidence type="ECO:0000255" key="1">
    <source>
        <dbReference type="HAMAP-Rule" id="MF_00411"/>
    </source>
</evidence>
<name>RPO1C_METMP</name>
<keyword id="KW-0963">Cytoplasm</keyword>
<keyword id="KW-0238">DNA-binding</keyword>
<keyword id="KW-0240">DNA-directed RNA polymerase</keyword>
<keyword id="KW-0548">Nucleotidyltransferase</keyword>
<keyword id="KW-1185">Reference proteome</keyword>
<keyword id="KW-0804">Transcription</keyword>
<keyword id="KW-0808">Transferase</keyword>
<sequence>MQMADLEKKLENSVLPPLLKRELSEKILREEISEEYLVDEIISETTRAYERTLVEPGEAVGVVAAQSIGEPGTQMTMRTFHYAGVAELNVTLGLPRMIEIVDARKEPSTPTMTIYLNDEFKGNREKAATVAKNIESTNVESVSEDISVDLVNECITIILNNQQLESRGLTVPDVIDAIKSKMKLKIEDHENVLNLKIKTPSLKALRKRLPKVRAIHLKGVQNIKRVIIRKEVDEYILYSEGSNIKEVFDIEGVDTTKTTTNNIVEIQDVLGIEAARNAIIYEMDATLGNQGLTVDKRHLMMVADLMCTDGVVKPIGRHGIGGEKASVLARAAFEETVKHLYSASMRGYVDELGGVVENIIVGKPISMGTGCIDICIDKSYEEGKEL</sequence>
<feature type="chain" id="PRO_1000049928" description="DNA-directed RNA polymerase subunit Rpo1C">
    <location>
        <begin position="1"/>
        <end position="386"/>
    </location>
</feature>
<accession>Q6LXI7</accession>
<gene>
    <name evidence="1" type="primary">rpo1C</name>
    <name evidence="1" type="synonym">rpoA2</name>
    <name type="ordered locus">MMP1364</name>
</gene>
<reference key="1">
    <citation type="journal article" date="2004" name="J. Bacteriol.">
        <title>Complete genome sequence of the genetically tractable hydrogenotrophic methanogen Methanococcus maripaludis.</title>
        <authorList>
            <person name="Hendrickson E.L."/>
            <person name="Kaul R."/>
            <person name="Zhou Y."/>
            <person name="Bovee D."/>
            <person name="Chapman P."/>
            <person name="Chung J."/>
            <person name="Conway de Macario E."/>
            <person name="Dodsworth J.A."/>
            <person name="Gillett W."/>
            <person name="Graham D.E."/>
            <person name="Hackett M."/>
            <person name="Haydock A.K."/>
            <person name="Kang A."/>
            <person name="Land M.L."/>
            <person name="Levy R."/>
            <person name="Lie T.J."/>
            <person name="Major T.A."/>
            <person name="Moore B.C."/>
            <person name="Porat I."/>
            <person name="Palmeiri A."/>
            <person name="Rouse G."/>
            <person name="Saenphimmachak C."/>
            <person name="Soell D."/>
            <person name="Van Dien S."/>
            <person name="Wang T."/>
            <person name="Whitman W.B."/>
            <person name="Xia Q."/>
            <person name="Zhang Y."/>
            <person name="Larimer F.W."/>
            <person name="Olson M.V."/>
            <person name="Leigh J.A."/>
        </authorList>
    </citation>
    <scope>NUCLEOTIDE SEQUENCE [LARGE SCALE GENOMIC DNA]</scope>
    <source>
        <strain>DSM 14266 / JCM 13030 / NBRC 101832 / S2 / LL</strain>
    </source>
</reference>